<feature type="chain" id="PRO_0000046464" description="DNA polymerase epsilon catalytic subunit A">
    <location>
        <begin position="1"/>
        <end position="2199"/>
    </location>
</feature>
<feature type="zinc finger region" description="CysA-type" evidence="2">
    <location>
        <begin position="2069"/>
        <end position="2107"/>
    </location>
</feature>
<feature type="short sequence motif" description="CysB motif" evidence="2">
    <location>
        <begin position="2138"/>
        <end position="2155"/>
    </location>
</feature>
<feature type="binding site" evidence="2">
    <location>
        <position position="2069"/>
    </location>
    <ligand>
        <name>Zn(2+)</name>
        <dbReference type="ChEBI" id="CHEBI:29105"/>
    </ligand>
</feature>
<feature type="binding site" evidence="2">
    <location>
        <position position="2072"/>
    </location>
    <ligand>
        <name>Zn(2+)</name>
        <dbReference type="ChEBI" id="CHEBI:29105"/>
    </ligand>
</feature>
<feature type="binding site" evidence="2">
    <location>
        <position position="2104"/>
    </location>
    <ligand>
        <name>Zn(2+)</name>
        <dbReference type="ChEBI" id="CHEBI:29105"/>
    </ligand>
</feature>
<feature type="binding site" evidence="2">
    <location>
        <position position="2107"/>
    </location>
    <ligand>
        <name>Zn(2+)</name>
        <dbReference type="ChEBI" id="CHEBI:29105"/>
    </ligand>
</feature>
<feature type="binding site" evidence="2">
    <location>
        <position position="2138"/>
    </location>
    <ligand>
        <name>[4Fe-4S] cluster</name>
        <dbReference type="ChEBI" id="CHEBI:49883"/>
    </ligand>
</feature>
<feature type="binding site" evidence="2">
    <location>
        <position position="2141"/>
    </location>
    <ligand>
        <name>[4Fe-4S] cluster</name>
        <dbReference type="ChEBI" id="CHEBI:49883"/>
    </ligand>
</feature>
<feature type="binding site" evidence="2">
    <location>
        <position position="2153"/>
    </location>
    <ligand>
        <name>[4Fe-4S] cluster</name>
        <dbReference type="ChEBI" id="CHEBI:49883"/>
    </ligand>
</feature>
<feature type="binding site" evidence="2">
    <location>
        <position position="2155"/>
    </location>
    <ligand>
        <name>[4Fe-4S] cluster</name>
        <dbReference type="ChEBI" id="CHEBI:49883"/>
    </ligand>
</feature>
<feature type="sequence conflict" description="In Ref. 2; BAA13884." evidence="3" ref="2">
    <original>FEETLVDNLYH</original>
    <variation>LRKLWWITYN</variation>
    <location>
        <begin position="2116"/>
        <end position="2126"/>
    </location>
</feature>
<feature type="sequence conflict" description="In Ref. 2; BAA13884." evidence="3" ref="2">
    <original>Y</original>
    <variation>N</variation>
    <location>
        <position position="2182"/>
    </location>
</feature>
<feature type="sequence conflict" description="In Ref. 2; BAA13884." evidence="3" ref="2">
    <original>SVLN</original>
    <variation>FCAELTFLD</variation>
    <location>
        <begin position="2196"/>
        <end position="2199"/>
    </location>
</feature>
<dbReference type="EC" id="2.7.7.7" evidence="2"/>
<dbReference type="EMBL" id="CU329671">
    <property type="protein sequence ID" value="CAB08772.1"/>
    <property type="molecule type" value="Genomic_DNA"/>
</dbReference>
<dbReference type="EMBL" id="D89223">
    <property type="protein sequence ID" value="BAA13884.1"/>
    <property type="molecule type" value="mRNA"/>
</dbReference>
<dbReference type="PIR" id="T40008">
    <property type="entry name" value="T40008"/>
</dbReference>
<dbReference type="PIR" id="T43044">
    <property type="entry name" value="T43044"/>
</dbReference>
<dbReference type="RefSeq" id="NP_596354.1">
    <property type="nucleotide sequence ID" value="NM_001022274.2"/>
</dbReference>
<dbReference type="SMR" id="P87154"/>
<dbReference type="BioGRID" id="277153">
    <property type="interactions" value="45"/>
</dbReference>
<dbReference type="ComplexPortal" id="CPX-2111">
    <property type="entry name" value="DNA polymerase epsilon complex"/>
</dbReference>
<dbReference type="DIP" id="DIP-36490N"/>
<dbReference type="FunCoup" id="P87154">
    <property type="interactions" value="391"/>
</dbReference>
<dbReference type="IntAct" id="P87154">
    <property type="interactions" value="3"/>
</dbReference>
<dbReference type="MINT" id="P87154"/>
<dbReference type="STRING" id="284812.P87154"/>
<dbReference type="iPTMnet" id="P87154"/>
<dbReference type="PaxDb" id="4896-SPBC25H2.13c.1"/>
<dbReference type="EnsemblFungi" id="SPBC25H2.13c.1">
    <property type="protein sequence ID" value="SPBC25H2.13c.1:pep"/>
    <property type="gene ID" value="SPBC25H2.13c"/>
</dbReference>
<dbReference type="GeneID" id="2540627"/>
<dbReference type="KEGG" id="spo:2540627"/>
<dbReference type="PomBase" id="SPBC25H2.13c"/>
<dbReference type="VEuPathDB" id="FungiDB:SPBC25H2.13c"/>
<dbReference type="eggNOG" id="KOG1798">
    <property type="taxonomic scope" value="Eukaryota"/>
</dbReference>
<dbReference type="HOGENOM" id="CLU_000556_0_1_1"/>
<dbReference type="InParanoid" id="P87154"/>
<dbReference type="OMA" id="MLDQCRY"/>
<dbReference type="PhylomeDB" id="P87154"/>
<dbReference type="Reactome" id="R-SPO-110314">
    <property type="pathway name" value="Recognition of DNA damage by PCNA-containing replication complex"/>
</dbReference>
<dbReference type="Reactome" id="R-SPO-5651801">
    <property type="pathway name" value="PCNA-Dependent Long Patch Base Excision Repair"/>
</dbReference>
<dbReference type="Reactome" id="R-SPO-5656169">
    <property type="pathway name" value="Termination of translesion DNA synthesis"/>
</dbReference>
<dbReference type="Reactome" id="R-SPO-5696397">
    <property type="pathway name" value="Gap-filling DNA repair synthesis and ligation in GG-NER"/>
</dbReference>
<dbReference type="Reactome" id="R-SPO-5696400">
    <property type="pathway name" value="Dual Incision in GG-NER"/>
</dbReference>
<dbReference type="Reactome" id="R-SPO-6782135">
    <property type="pathway name" value="Dual incision in TC-NER"/>
</dbReference>
<dbReference type="Reactome" id="R-SPO-6782210">
    <property type="pathway name" value="Gap-filling DNA repair synthesis and ligation in TC-NER"/>
</dbReference>
<dbReference type="Reactome" id="R-SPO-68952">
    <property type="pathway name" value="DNA replication initiation"/>
</dbReference>
<dbReference type="Reactome" id="R-SPO-68962">
    <property type="pathway name" value="Activation of the pre-replicative complex"/>
</dbReference>
<dbReference type="PRO" id="PR:P87154"/>
<dbReference type="Proteomes" id="UP000002485">
    <property type="component" value="Chromosome II"/>
</dbReference>
<dbReference type="GO" id="GO:0140445">
    <property type="term" value="C:chromosome, telomeric repeat region"/>
    <property type="evidence" value="ECO:0000314"/>
    <property type="project" value="PomBase"/>
</dbReference>
<dbReference type="GO" id="GO:0008622">
    <property type="term" value="C:epsilon DNA polymerase complex"/>
    <property type="evidence" value="ECO:0000266"/>
    <property type="project" value="PomBase"/>
</dbReference>
<dbReference type="GO" id="GO:0043596">
    <property type="term" value="C:nuclear replication fork"/>
    <property type="evidence" value="ECO:0000305"/>
    <property type="project" value="PomBase"/>
</dbReference>
<dbReference type="GO" id="GO:0051539">
    <property type="term" value="F:4 iron, 4 sulfur cluster binding"/>
    <property type="evidence" value="ECO:0007669"/>
    <property type="project" value="UniProtKB-KW"/>
</dbReference>
<dbReference type="GO" id="GO:0003677">
    <property type="term" value="F:DNA binding"/>
    <property type="evidence" value="ECO:0000318"/>
    <property type="project" value="GO_Central"/>
</dbReference>
<dbReference type="GO" id="GO:0003887">
    <property type="term" value="F:DNA-directed DNA polymerase activity"/>
    <property type="evidence" value="ECO:0000314"/>
    <property type="project" value="PomBase"/>
</dbReference>
<dbReference type="GO" id="GO:0000166">
    <property type="term" value="F:nucleotide binding"/>
    <property type="evidence" value="ECO:0007669"/>
    <property type="project" value="InterPro"/>
</dbReference>
<dbReference type="GO" id="GO:0008310">
    <property type="term" value="F:single-stranded DNA 3'-5' DNA exonuclease activity"/>
    <property type="evidence" value="ECO:0000318"/>
    <property type="project" value="GO_Central"/>
</dbReference>
<dbReference type="GO" id="GO:0008270">
    <property type="term" value="F:zinc ion binding"/>
    <property type="evidence" value="ECO:0007669"/>
    <property type="project" value="UniProtKB-KW"/>
</dbReference>
<dbReference type="GO" id="GO:0006287">
    <property type="term" value="P:base-excision repair, gap-filling"/>
    <property type="evidence" value="ECO:0000318"/>
    <property type="project" value="GO_Central"/>
</dbReference>
<dbReference type="GO" id="GO:0034080">
    <property type="term" value="P:CENP-A containing chromatin assembly"/>
    <property type="evidence" value="ECO:0000315"/>
    <property type="project" value="PomBase"/>
</dbReference>
<dbReference type="GO" id="GO:0006325">
    <property type="term" value="P:chromatin organization"/>
    <property type="evidence" value="ECO:0000315"/>
    <property type="project" value="PomBase"/>
</dbReference>
<dbReference type="GO" id="GO:0140529">
    <property type="term" value="P:CMG complex assembly"/>
    <property type="evidence" value="ECO:0000315"/>
    <property type="project" value="PomBase"/>
</dbReference>
<dbReference type="GO" id="GO:0045004">
    <property type="term" value="P:DNA replication proofreading"/>
    <property type="evidence" value="ECO:0000318"/>
    <property type="project" value="GO_Central"/>
</dbReference>
<dbReference type="GO" id="GO:1902983">
    <property type="term" value="P:DNA strand elongation involved in mitotic DNA replication"/>
    <property type="evidence" value="ECO:0000315"/>
    <property type="project" value="PomBase"/>
</dbReference>
<dbReference type="GO" id="GO:0006261">
    <property type="term" value="P:DNA-templated DNA replication"/>
    <property type="evidence" value="ECO:0000303"/>
    <property type="project" value="ComplexPortal"/>
</dbReference>
<dbReference type="GO" id="GO:0006272">
    <property type="term" value="P:leading strand elongation"/>
    <property type="evidence" value="ECO:0000318"/>
    <property type="project" value="GO_Central"/>
</dbReference>
<dbReference type="GO" id="GO:0000278">
    <property type="term" value="P:mitotic cell cycle"/>
    <property type="evidence" value="ECO:0000318"/>
    <property type="project" value="GO_Central"/>
</dbReference>
<dbReference type="GO" id="GO:1902975">
    <property type="term" value="P:mitotic DNA replication initiation"/>
    <property type="evidence" value="ECO:0000315"/>
    <property type="project" value="PomBase"/>
</dbReference>
<dbReference type="GO" id="GO:1903460">
    <property type="term" value="P:mitotic DNA replication leading strand elongation"/>
    <property type="evidence" value="ECO:0000315"/>
    <property type="project" value="PomBase"/>
</dbReference>
<dbReference type="GO" id="GO:0033260">
    <property type="term" value="P:nuclear DNA replication"/>
    <property type="evidence" value="ECO:0000315"/>
    <property type="project" value="PomBase"/>
</dbReference>
<dbReference type="GO" id="GO:0006297">
    <property type="term" value="P:nucleotide-excision repair, DNA gap filling"/>
    <property type="evidence" value="ECO:0000318"/>
    <property type="project" value="GO_Central"/>
</dbReference>
<dbReference type="GO" id="GO:0031048">
    <property type="term" value="P:regulatory ncRNA-mediated heterochromatin formation"/>
    <property type="evidence" value="ECO:0000315"/>
    <property type="project" value="PomBase"/>
</dbReference>
<dbReference type="CDD" id="cd05779">
    <property type="entry name" value="DNA_polB_epsilon_exo"/>
    <property type="match status" value="1"/>
</dbReference>
<dbReference type="CDD" id="cd05535">
    <property type="entry name" value="POLBc_epsilon"/>
    <property type="match status" value="1"/>
</dbReference>
<dbReference type="FunFam" id="1.10.132.60:FF:000002">
    <property type="entry name" value="DNA polymerase epsilon catalytic subunit"/>
    <property type="match status" value="1"/>
</dbReference>
<dbReference type="FunFam" id="1.10.287.690:FF:000005">
    <property type="entry name" value="DNA polymerase epsilon catalytic subunit"/>
    <property type="match status" value="1"/>
</dbReference>
<dbReference type="FunFam" id="3.30.342.10:FF:000005">
    <property type="entry name" value="DNA polymerase epsilon catalytic subunit"/>
    <property type="match status" value="1"/>
</dbReference>
<dbReference type="FunFam" id="3.30.420.10:FF:000010">
    <property type="entry name" value="DNA polymerase epsilon catalytic subunit"/>
    <property type="match status" value="1"/>
</dbReference>
<dbReference type="FunFam" id="3.90.1600.10:FF:000006">
    <property type="entry name" value="DNA polymerase epsilon catalytic subunit"/>
    <property type="match status" value="1"/>
</dbReference>
<dbReference type="Gene3D" id="1.10.132.60">
    <property type="entry name" value="DNA polymerase family B, C-terminal domain"/>
    <property type="match status" value="1"/>
</dbReference>
<dbReference type="Gene3D" id="3.30.342.10">
    <property type="entry name" value="DNA Polymerase, chain B, domain 1"/>
    <property type="match status" value="1"/>
</dbReference>
<dbReference type="Gene3D" id="3.90.1600.10">
    <property type="entry name" value="Palm domain of DNA polymerase"/>
    <property type="match status" value="1"/>
</dbReference>
<dbReference type="Gene3D" id="3.30.420.10">
    <property type="entry name" value="Ribonuclease H-like superfamily/Ribonuclease H"/>
    <property type="match status" value="1"/>
</dbReference>
<dbReference type="InterPro" id="IPR006172">
    <property type="entry name" value="DNA-dir_DNA_pol_B"/>
</dbReference>
<dbReference type="InterPro" id="IPR006133">
    <property type="entry name" value="DNA-dir_DNA_pol_B_exonuc"/>
</dbReference>
<dbReference type="InterPro" id="IPR043502">
    <property type="entry name" value="DNA/RNA_pol_sf"/>
</dbReference>
<dbReference type="InterPro" id="IPR042087">
    <property type="entry name" value="DNA_pol_B_thumb"/>
</dbReference>
<dbReference type="InterPro" id="IPR013697">
    <property type="entry name" value="DNA_pol_e_suA_C"/>
</dbReference>
<dbReference type="InterPro" id="IPR023211">
    <property type="entry name" value="DNA_pol_palm_dom_sf"/>
</dbReference>
<dbReference type="InterPro" id="IPR029703">
    <property type="entry name" value="POL2"/>
</dbReference>
<dbReference type="InterPro" id="IPR055191">
    <property type="entry name" value="POL2_thumb"/>
</dbReference>
<dbReference type="InterPro" id="IPR012337">
    <property type="entry name" value="RNaseH-like_sf"/>
</dbReference>
<dbReference type="InterPro" id="IPR036397">
    <property type="entry name" value="RNaseH_sf"/>
</dbReference>
<dbReference type="InterPro" id="IPR054475">
    <property type="entry name" value="Znf-DPOE"/>
</dbReference>
<dbReference type="PANTHER" id="PTHR10670">
    <property type="entry name" value="DNA POLYMERASE EPSILON CATALYTIC SUBUNIT A"/>
    <property type="match status" value="1"/>
</dbReference>
<dbReference type="PANTHER" id="PTHR10670:SF0">
    <property type="entry name" value="DNA POLYMERASE EPSILON CATALYTIC SUBUNIT A"/>
    <property type="match status" value="1"/>
</dbReference>
<dbReference type="Pfam" id="PF03104">
    <property type="entry name" value="DNA_pol_B_exo1"/>
    <property type="match status" value="1"/>
</dbReference>
<dbReference type="Pfam" id="PF08490">
    <property type="entry name" value="DUF1744"/>
    <property type="match status" value="1"/>
</dbReference>
<dbReference type="Pfam" id="PF22634">
    <property type="entry name" value="POL2_thumb"/>
    <property type="match status" value="1"/>
</dbReference>
<dbReference type="Pfam" id="PF22912">
    <property type="entry name" value="zf-DPOE"/>
    <property type="match status" value="1"/>
</dbReference>
<dbReference type="SMART" id="SM01159">
    <property type="entry name" value="DUF1744"/>
    <property type="match status" value="1"/>
</dbReference>
<dbReference type="SMART" id="SM00486">
    <property type="entry name" value="POLBc"/>
    <property type="match status" value="1"/>
</dbReference>
<dbReference type="SUPFAM" id="SSF56672">
    <property type="entry name" value="DNA/RNA polymerases"/>
    <property type="match status" value="1"/>
</dbReference>
<dbReference type="SUPFAM" id="SSF53098">
    <property type="entry name" value="Ribonuclease H-like"/>
    <property type="match status" value="1"/>
</dbReference>
<accession>P87154</accession>
<accession>P78873</accession>
<organism>
    <name type="scientific">Schizosaccharomyces pombe (strain 972 / ATCC 24843)</name>
    <name type="common">Fission yeast</name>
    <dbReference type="NCBI Taxonomy" id="284812"/>
    <lineage>
        <taxon>Eukaryota</taxon>
        <taxon>Fungi</taxon>
        <taxon>Dikarya</taxon>
        <taxon>Ascomycota</taxon>
        <taxon>Taphrinomycotina</taxon>
        <taxon>Schizosaccharomycetes</taxon>
        <taxon>Schizosaccharomycetales</taxon>
        <taxon>Schizosaccharomycetaceae</taxon>
        <taxon>Schizosaccharomyces</taxon>
    </lineage>
</organism>
<evidence type="ECO:0000250" key="1"/>
<evidence type="ECO:0000250" key="2">
    <source>
        <dbReference type="UniProtKB" id="P15436"/>
    </source>
</evidence>
<evidence type="ECO:0000305" key="3"/>
<comment type="function">
    <text evidence="2">DNA polymerase II participates in chromosomal DNA replication.</text>
</comment>
<comment type="catalytic activity">
    <reaction evidence="2">
        <text>DNA(n) + a 2'-deoxyribonucleoside 5'-triphosphate = DNA(n+1) + diphosphate</text>
        <dbReference type="Rhea" id="RHEA:22508"/>
        <dbReference type="Rhea" id="RHEA-COMP:17339"/>
        <dbReference type="Rhea" id="RHEA-COMP:17340"/>
        <dbReference type="ChEBI" id="CHEBI:33019"/>
        <dbReference type="ChEBI" id="CHEBI:61560"/>
        <dbReference type="ChEBI" id="CHEBI:173112"/>
        <dbReference type="EC" id="2.7.7.7"/>
    </reaction>
</comment>
<comment type="cofactor">
    <cofactor evidence="2">
        <name>[4Fe-4S] cluster</name>
        <dbReference type="ChEBI" id="CHEBI:49883"/>
    </cofactor>
    <text evidence="2">Binds 1 [4Fe-4S] cluster.</text>
</comment>
<comment type="subunit">
    <text evidence="1">Heterotetramer. Consists of 4 subunits: pol2, dpb2, dpb3 and dpb4 (By similarity).</text>
</comment>
<comment type="interaction">
    <interactant intactId="EBI-876811">
        <id>P87154</id>
    </interactant>
    <interactant intactId="EBI-904886">
        <id>O74560</id>
        <label>raf2</label>
    </interactant>
    <organismsDiffer>false</organismsDiffer>
    <experiments>2</experiments>
</comment>
<comment type="subcellular location">
    <subcellularLocation>
        <location evidence="1">Nucleus</location>
    </subcellularLocation>
</comment>
<comment type="domain">
    <text evidence="2">The CysA-type zinc finger is required for PCNA-binding.</text>
</comment>
<comment type="domain">
    <text evidence="2">The CysB motif binds 1 4Fe-4S cluster and is required for the formation of polymerase complexes.</text>
</comment>
<comment type="similarity">
    <text evidence="3">Belongs to the DNA polymerase type-B family.</text>
</comment>
<reference key="1">
    <citation type="journal article" date="2002" name="Nature">
        <title>The genome sequence of Schizosaccharomyces pombe.</title>
        <authorList>
            <person name="Wood V."/>
            <person name="Gwilliam R."/>
            <person name="Rajandream M.A."/>
            <person name="Lyne M.H."/>
            <person name="Lyne R."/>
            <person name="Stewart A."/>
            <person name="Sgouros J.G."/>
            <person name="Peat N."/>
            <person name="Hayles J."/>
            <person name="Baker S.G."/>
            <person name="Basham D."/>
            <person name="Bowman S."/>
            <person name="Brooks K."/>
            <person name="Brown D."/>
            <person name="Brown S."/>
            <person name="Chillingworth T."/>
            <person name="Churcher C.M."/>
            <person name="Collins M."/>
            <person name="Connor R."/>
            <person name="Cronin A."/>
            <person name="Davis P."/>
            <person name="Feltwell T."/>
            <person name="Fraser A."/>
            <person name="Gentles S."/>
            <person name="Goble A."/>
            <person name="Hamlin N."/>
            <person name="Harris D.E."/>
            <person name="Hidalgo J."/>
            <person name="Hodgson G."/>
            <person name="Holroyd S."/>
            <person name="Hornsby T."/>
            <person name="Howarth S."/>
            <person name="Huckle E.J."/>
            <person name="Hunt S."/>
            <person name="Jagels K."/>
            <person name="James K.D."/>
            <person name="Jones L."/>
            <person name="Jones M."/>
            <person name="Leather S."/>
            <person name="McDonald S."/>
            <person name="McLean J."/>
            <person name="Mooney P."/>
            <person name="Moule S."/>
            <person name="Mungall K.L."/>
            <person name="Murphy L.D."/>
            <person name="Niblett D."/>
            <person name="Odell C."/>
            <person name="Oliver K."/>
            <person name="O'Neil S."/>
            <person name="Pearson D."/>
            <person name="Quail M.A."/>
            <person name="Rabbinowitsch E."/>
            <person name="Rutherford K.M."/>
            <person name="Rutter S."/>
            <person name="Saunders D."/>
            <person name="Seeger K."/>
            <person name="Sharp S."/>
            <person name="Skelton J."/>
            <person name="Simmonds M.N."/>
            <person name="Squares R."/>
            <person name="Squares S."/>
            <person name="Stevens K."/>
            <person name="Taylor K."/>
            <person name="Taylor R.G."/>
            <person name="Tivey A."/>
            <person name="Walsh S.V."/>
            <person name="Warren T."/>
            <person name="Whitehead S."/>
            <person name="Woodward J.R."/>
            <person name="Volckaert G."/>
            <person name="Aert R."/>
            <person name="Robben J."/>
            <person name="Grymonprez B."/>
            <person name="Weltjens I."/>
            <person name="Vanstreels E."/>
            <person name="Rieger M."/>
            <person name="Schaefer M."/>
            <person name="Mueller-Auer S."/>
            <person name="Gabel C."/>
            <person name="Fuchs M."/>
            <person name="Duesterhoeft A."/>
            <person name="Fritzc C."/>
            <person name="Holzer E."/>
            <person name="Moestl D."/>
            <person name="Hilbert H."/>
            <person name="Borzym K."/>
            <person name="Langer I."/>
            <person name="Beck A."/>
            <person name="Lehrach H."/>
            <person name="Reinhardt R."/>
            <person name="Pohl T.M."/>
            <person name="Eger P."/>
            <person name="Zimmermann W."/>
            <person name="Wedler H."/>
            <person name="Wambutt R."/>
            <person name="Purnelle B."/>
            <person name="Goffeau A."/>
            <person name="Cadieu E."/>
            <person name="Dreano S."/>
            <person name="Gloux S."/>
            <person name="Lelaure V."/>
            <person name="Mottier S."/>
            <person name="Galibert F."/>
            <person name="Aves S.J."/>
            <person name="Xiang Z."/>
            <person name="Hunt C."/>
            <person name="Moore K."/>
            <person name="Hurst S.M."/>
            <person name="Lucas M."/>
            <person name="Rochet M."/>
            <person name="Gaillardin C."/>
            <person name="Tallada V.A."/>
            <person name="Garzon A."/>
            <person name="Thode G."/>
            <person name="Daga R.R."/>
            <person name="Cruzado L."/>
            <person name="Jimenez J."/>
            <person name="Sanchez M."/>
            <person name="del Rey F."/>
            <person name="Benito J."/>
            <person name="Dominguez A."/>
            <person name="Revuelta J.L."/>
            <person name="Moreno S."/>
            <person name="Armstrong J."/>
            <person name="Forsburg S.L."/>
            <person name="Cerutti L."/>
            <person name="Lowe T."/>
            <person name="McCombie W.R."/>
            <person name="Paulsen I."/>
            <person name="Potashkin J."/>
            <person name="Shpakovski G.V."/>
            <person name="Ussery D."/>
            <person name="Barrell B.G."/>
            <person name="Nurse P."/>
        </authorList>
    </citation>
    <scope>NUCLEOTIDE SEQUENCE [LARGE SCALE GENOMIC DNA]</scope>
    <source>
        <strain>972 / ATCC 24843</strain>
    </source>
</reference>
<reference key="2">
    <citation type="journal article" date="1997" name="DNA Res.">
        <title>Identification of open reading frames in Schizosaccharomyces pombe cDNAs.</title>
        <authorList>
            <person name="Yoshioka S."/>
            <person name="Kato K."/>
            <person name="Nakai K."/>
            <person name="Okayama H."/>
            <person name="Nojima H."/>
        </authorList>
    </citation>
    <scope>NUCLEOTIDE SEQUENCE [LARGE SCALE MRNA] OF 1891-2199</scope>
    <source>
        <strain>PR745</strain>
    </source>
</reference>
<name>DPOE_SCHPO</name>
<keyword id="KW-0004">4Fe-4S</keyword>
<keyword id="KW-0235">DNA replication</keyword>
<keyword id="KW-0238">DNA-binding</keyword>
<keyword id="KW-0239">DNA-directed DNA polymerase</keyword>
<keyword id="KW-0408">Iron</keyword>
<keyword id="KW-0411">Iron-sulfur</keyword>
<keyword id="KW-0479">Metal-binding</keyword>
<keyword id="KW-0548">Nucleotidyltransferase</keyword>
<keyword id="KW-0539">Nucleus</keyword>
<keyword id="KW-1185">Reference proteome</keyword>
<keyword id="KW-0808">Transferase</keyword>
<keyword id="KW-0862">Zinc</keyword>
<keyword id="KW-0863">Zinc-finger</keyword>
<proteinExistence type="evidence at protein level"/>
<sequence>MPLKTARGASKYQFRKFNGNYNGKSKSNGRTFAKSTEEVGFNDPMKIVYKKNEIDRMMGFDSYEGGQPREAWLLNVHPTVIESTKGNSTLSAVDFYFIQDDGDTFRCTIPYSPYFYIAAREGKEALVDDYLKKKFVGLIKSTTRIFKEDLQLKNHIVGYQKLYIKLVFDNLNDLQAVRKSLMSAVKANSSQQDAVDAYTNLSSENLNGIIENAFEDPLNHVLDIREYDVPYHSRTLIDLNIRVGQWYTVSYHEGHVQISLLASRIERAEPTIMAFDIETTKLPLKFPDSSFDKIMMISYMIDGQGFLITNREIISQNIEDFHYTPREEFEGPFIIFNEPDEVGLLHRFFKHIRSAKPSVIVTYNGDFFDWPFVDARAAFHGLNLTEETGFFRDAEDEYKSSYCSHMDAFRWVKRDSYLPQGSQGLKAVTVSKLGYNPIELDPELMTPYASEKPQVLAQYSVSDAVATYFLYMKYVHPFIFSLCNIIPLNPDEVLRKGTGTLCETLLTVEACTKNIILPNKHVDASQKFFDGHLLASETYVGGHVESLESGVFRSDLPTNFNMDPKVYEELILQLDKALDFSLTVENNVNVDEIENYEEVRDSILKKLSDLRDRPKRSEKPRIYHLDVASMYPNIMITNRLQPDSVKDESFCATCDLNVPNKTCDRRMVWAWRGEYYPAKKGEYHMIYSALQSERFPGPTPFSPFRSFQELSPSEQAAMVQKRIADYSRKVYHRLYDNTVIERETIICQKENSFYIDTVKSFRDRRYDFKGLQKKWVKQLAAIKEKGGLAEIEEAKKMVVLYDSLQLAHKVILNSFYGYVMRKGSRWYSIEMAGITCLTGATIIQMARQIVERAGRPLELDTDGIWCILPESFPENFEFKKKSGGKVFISYPCVMLNHLVHEKFTNHQYSALKDPEKLVYETTSENSIFFEVDGPYRAMILPASTEEGKNLKKRYAVFNFDGSLAELKGFEVKRRGELKLIKDFQSQIFKVFLKGDSLEECYQEVAYVADTWLEILFTKGSNLTDDELIELISENRSMSKALSEYGSQKSTSITTARRLADFLGDQMTKDKGLACRFIISASPKGRPVAERAVPVAIFFAEESVKRHFLRLWLKDNGLYDVDIRDIIDWDYYLKRLGSVVQKLISIPAALQRISNPVTRFPLPDWLQKRVAVLNSKYQQKKIDSIFSLAPTNPSTINNTKVTDIEDLGSVTHKDKRIVARVTKRKLLQQSGNSEAPVSFEVKPVSFMDGYSNWLKYAKKKWKYQKQVKLRRRHLIGFQSRQFTNVLQSSAEVMFENLWHILQIRETDVPGILHAWVIIRNRLTSIRFIVNRKFFVCFKDETLPNVEIEGCLIEKSNAILPHGSTSDKLFLLEIPEKSYLTEKVSISMIFAHPSVSGIYETRIEPIERLILEMGSRKRFNNSVPGALGKGFEFGFESKMFTDPSDNDVSYLDGVEMNYLYAFHFSISNRFVFSLFMPHLKKVEAIIYDKLPGSDMSFPSISKIYEELRSKFDNLIKESSIEYPDTLSCNVIFSGNERKAYKLIDEKLLQYFSTKTKNSLLIIESSLPHILKANVKQIEELPYIMIPRLESNIQSLSWKQHIATKMIQHFLAIGSWLFHRIQLSRFSDIPLCNFESDDIQYSIDVVYSRKLKEHNIILWWNKGPTPDLGGIEKDSILQIASPKDPLEVNNPGAYSNACVDISLSNLALCSILNSALINDIEGIGDMAALNDNYMTAINDDLEEKLGIHDNIGLTHSLPVLKALVKTWWNEAASGNNLADLIIQHLARWISSSKSYLYSPLLSSHVEVIMRKTFLQLLSEIKRLGAHIIHASANKILIKTSKLIVQNAVTYSNYLLKSIKTLPLFHFLDLNVTEYWDYLLWMDSVNYGGKMVAANFSATNEEPQTVVSWHIKSHLPPIIQPEFQSWIVEFIEEVYKQKLEKSNTKVGFVRVKNNNADEDSEIVGSGILKSKLIHPLKRKVAQVRRCFQELQLDENTREDLKFPKLPGSFLNYTDGALELVKSICAVFELSHDLNLEVRFLKKSLLSLLQIQEFSTQAVFRYPSRRLSLDQIPCKQCGVHQDFDLCLHEHLWPTRDDMGTLVFSDGWSCSSCNLVYDRWVFEETLVDNLYHQLTLYQLQDLICSKCKTVKQWSLKERCSCSGEWVLQLSPTKFREMLNVYQSVADFYEFSILQNSVQSILSVLN</sequence>
<gene>
    <name type="primary">pol2</name>
    <name type="synonym">cdc20</name>
    <name type="ORF">SPBC25H2.13c</name>
</gene>
<protein>
    <recommendedName>
        <fullName>DNA polymerase epsilon catalytic subunit A</fullName>
        <ecNumber evidence="2">2.7.7.7</ecNumber>
    </recommendedName>
    <alternativeName>
        <fullName>DNA polymerase II subunit A</fullName>
    </alternativeName>
</protein>